<organism>
    <name type="scientific">Salmonella typhimurium (strain LT2 / SGSC1412 / ATCC 700720)</name>
    <dbReference type="NCBI Taxonomy" id="99287"/>
    <lineage>
        <taxon>Bacteria</taxon>
        <taxon>Pseudomonadati</taxon>
        <taxon>Pseudomonadota</taxon>
        <taxon>Gammaproteobacteria</taxon>
        <taxon>Enterobacterales</taxon>
        <taxon>Enterobacteriaceae</taxon>
        <taxon>Salmonella</taxon>
    </lineage>
</organism>
<feature type="chain" id="PRO_0000041989" description="Protein UmuD">
    <location>
        <begin position="1"/>
        <end position="139"/>
    </location>
</feature>
<feature type="chain" id="PRO_0000027307" description="Protein UmuD'">
    <location>
        <begin position="25"/>
        <end position="139"/>
    </location>
</feature>
<feature type="active site" description="For autocatalytic cleavage activity" evidence="1">
    <location>
        <position position="60"/>
    </location>
</feature>
<feature type="active site" description="For autocatalytic cleavage activity" evidence="1">
    <location>
        <position position="97"/>
    </location>
</feature>
<feature type="site" description="Cleavage; by autolysis">
    <location>
        <begin position="24"/>
        <end position="25"/>
    </location>
</feature>
<dbReference type="EC" id="3.4.21.-"/>
<dbReference type="EMBL" id="M57431">
    <property type="protein sequence ID" value="AAA27247.1"/>
    <property type="molecule type" value="Genomic_DNA"/>
</dbReference>
<dbReference type="EMBL" id="AE006468">
    <property type="protein sequence ID" value="AAL20908.1"/>
    <property type="molecule type" value="Genomic_DNA"/>
</dbReference>
<dbReference type="PIR" id="A36713">
    <property type="entry name" value="A36713"/>
</dbReference>
<dbReference type="RefSeq" id="NP_460949.1">
    <property type="nucleotide sequence ID" value="NC_003197.2"/>
</dbReference>
<dbReference type="RefSeq" id="WP_000394196.1">
    <property type="nucleotide sequence ID" value="NC_003197.2"/>
</dbReference>
<dbReference type="SMR" id="P22493"/>
<dbReference type="STRING" id="99287.STM1998"/>
<dbReference type="MEROPS" id="S24.003"/>
<dbReference type="PaxDb" id="99287-STM1998"/>
<dbReference type="GeneID" id="1253519"/>
<dbReference type="KEGG" id="stm:STM1998"/>
<dbReference type="PATRIC" id="fig|99287.12.peg.2116"/>
<dbReference type="HOGENOM" id="CLU_066192_0_0_6"/>
<dbReference type="OMA" id="DCIHVED"/>
<dbReference type="PhylomeDB" id="P22493"/>
<dbReference type="BioCyc" id="SENT99287:STM1998-MONOMER"/>
<dbReference type="Proteomes" id="UP000001014">
    <property type="component" value="Chromosome"/>
</dbReference>
<dbReference type="GO" id="GO:0032993">
    <property type="term" value="C:protein-DNA complex"/>
    <property type="evidence" value="ECO:0000318"/>
    <property type="project" value="GO_Central"/>
</dbReference>
<dbReference type="GO" id="GO:0001217">
    <property type="term" value="F:DNA-binding transcription repressor activity"/>
    <property type="evidence" value="ECO:0000318"/>
    <property type="project" value="GO_Central"/>
</dbReference>
<dbReference type="GO" id="GO:0043565">
    <property type="term" value="F:sequence-specific DNA binding"/>
    <property type="evidence" value="ECO:0000318"/>
    <property type="project" value="GO_Central"/>
</dbReference>
<dbReference type="GO" id="GO:0008236">
    <property type="term" value="F:serine-type peptidase activity"/>
    <property type="evidence" value="ECO:0007669"/>
    <property type="project" value="UniProtKB-KW"/>
</dbReference>
<dbReference type="GO" id="GO:0006281">
    <property type="term" value="P:DNA repair"/>
    <property type="evidence" value="ECO:0007669"/>
    <property type="project" value="UniProtKB-KW"/>
</dbReference>
<dbReference type="GO" id="GO:0045892">
    <property type="term" value="P:negative regulation of DNA-templated transcription"/>
    <property type="evidence" value="ECO:0000318"/>
    <property type="project" value="GO_Central"/>
</dbReference>
<dbReference type="GO" id="GO:0006508">
    <property type="term" value="P:proteolysis"/>
    <property type="evidence" value="ECO:0007669"/>
    <property type="project" value="UniProtKB-KW"/>
</dbReference>
<dbReference type="GO" id="GO:0009432">
    <property type="term" value="P:SOS response"/>
    <property type="evidence" value="ECO:0000318"/>
    <property type="project" value="GO_Central"/>
</dbReference>
<dbReference type="CDD" id="cd06529">
    <property type="entry name" value="S24_LexA-like"/>
    <property type="match status" value="1"/>
</dbReference>
<dbReference type="Gene3D" id="2.10.109.10">
    <property type="entry name" value="Umud Fragment, subunit A"/>
    <property type="match status" value="1"/>
</dbReference>
<dbReference type="InterPro" id="IPR039418">
    <property type="entry name" value="LexA-like"/>
</dbReference>
<dbReference type="InterPro" id="IPR036286">
    <property type="entry name" value="LexA/Signal_pep-like_sf"/>
</dbReference>
<dbReference type="InterPro" id="IPR050077">
    <property type="entry name" value="LexA_repressor"/>
</dbReference>
<dbReference type="InterPro" id="IPR006197">
    <property type="entry name" value="Peptidase_S24_LexA"/>
</dbReference>
<dbReference type="InterPro" id="IPR015927">
    <property type="entry name" value="Peptidase_S24_S26A/B/C"/>
</dbReference>
<dbReference type="NCBIfam" id="NF007621">
    <property type="entry name" value="PRK10276.1"/>
    <property type="match status" value="1"/>
</dbReference>
<dbReference type="PANTHER" id="PTHR33516">
    <property type="entry name" value="LEXA REPRESSOR"/>
    <property type="match status" value="1"/>
</dbReference>
<dbReference type="PANTHER" id="PTHR33516:SF2">
    <property type="entry name" value="LEXA REPRESSOR-RELATED"/>
    <property type="match status" value="1"/>
</dbReference>
<dbReference type="Pfam" id="PF00717">
    <property type="entry name" value="Peptidase_S24"/>
    <property type="match status" value="1"/>
</dbReference>
<dbReference type="PRINTS" id="PR00726">
    <property type="entry name" value="LEXASERPTASE"/>
</dbReference>
<dbReference type="SUPFAM" id="SSF51306">
    <property type="entry name" value="LexA/Signal peptidase"/>
    <property type="match status" value="1"/>
</dbReference>
<keyword id="KW-0068">Autocatalytic cleavage</keyword>
<keyword id="KW-0227">DNA damage</keyword>
<keyword id="KW-0234">DNA repair</keyword>
<keyword id="KW-0378">Hydrolase</keyword>
<keyword id="KW-0645">Protease</keyword>
<keyword id="KW-1185">Reference proteome</keyword>
<keyword id="KW-0720">Serine protease</keyword>
<keyword id="KW-0741">SOS mutagenesis</keyword>
<keyword id="KW-0742">SOS response</keyword>
<name>UMUD_SALTY</name>
<accession>P22493</accession>
<comment type="function">
    <text>Involved in UV protection and mutation. Essential for induced (or SOS) mutagenesis. May modify the DNA replication machinery to allow bypass synthesis across a damaged template.</text>
</comment>
<comment type="similarity">
    <text evidence="2">Belongs to the peptidase S24 family.</text>
</comment>
<reference key="1">
    <citation type="journal article" date="1990" name="J. Bacteriol.">
        <title>Sequence analysis and mapping of the Salmonella typhimurium LT2 umuDC operon.</title>
        <authorList>
            <person name="Smith C.M."/>
            <person name="Koch W.H."/>
            <person name="Franklin S.B."/>
            <person name="Foster P.L."/>
            <person name="Cebula T.A."/>
            <person name="Eisenstadt E."/>
        </authorList>
    </citation>
    <scope>NUCLEOTIDE SEQUENCE [GENOMIC DNA]</scope>
    <source>
        <strain>LT2</strain>
    </source>
</reference>
<reference key="2">
    <citation type="journal article" date="1990" name="J. Bacteriol.">
        <title>Structural characterization of the Salmonella typhimurium LT2 umu operon.</title>
        <authorList>
            <person name="Thomas S.M."/>
            <person name="Crowne H.M."/>
            <person name="Pidsley S.C."/>
            <person name="Sedgwick S.G."/>
        </authorList>
    </citation>
    <scope>NUCLEOTIDE SEQUENCE [GENOMIC DNA]</scope>
    <source>
        <strain>LT2</strain>
    </source>
</reference>
<reference key="3">
    <citation type="journal article" date="2001" name="Nature">
        <title>Complete genome sequence of Salmonella enterica serovar Typhimurium LT2.</title>
        <authorList>
            <person name="McClelland M."/>
            <person name="Sanderson K.E."/>
            <person name="Spieth J."/>
            <person name="Clifton S.W."/>
            <person name="Latreille P."/>
            <person name="Courtney L."/>
            <person name="Porwollik S."/>
            <person name="Ali J."/>
            <person name="Dante M."/>
            <person name="Du F."/>
            <person name="Hou S."/>
            <person name="Layman D."/>
            <person name="Leonard S."/>
            <person name="Nguyen C."/>
            <person name="Scott K."/>
            <person name="Holmes A."/>
            <person name="Grewal N."/>
            <person name="Mulvaney E."/>
            <person name="Ryan E."/>
            <person name="Sun H."/>
            <person name="Florea L."/>
            <person name="Miller W."/>
            <person name="Stoneking T."/>
            <person name="Nhan M."/>
            <person name="Waterston R."/>
            <person name="Wilson R.K."/>
        </authorList>
    </citation>
    <scope>NUCLEOTIDE SEQUENCE [LARGE SCALE GENOMIC DNA]</scope>
    <source>
        <strain>LT2 / SGSC1412 / ATCC 700720</strain>
    </source>
</reference>
<reference key="4">
    <citation type="journal article" date="1991" name="Mol. Gen. Genet.">
        <title>Induction and cleavage of Salmonella typhimurium UmuD protein.</title>
        <authorList>
            <person name="Woodgate R."/>
            <person name="Levine A.S."/>
            <person name="Koch W.H."/>
            <person name="Cebula T.A."/>
            <person name="Eisenstadt E."/>
        </authorList>
    </citation>
    <scope>PROTEOLYTIC PROCESSING</scope>
</reference>
<proteinExistence type="evidence at protein level"/>
<gene>
    <name type="primary">umuD</name>
    <name type="ordered locus">STM1998</name>
</gene>
<sequence>MEFFRPTELREIIPLPFFSYLVPCGFPSPAADYIEQRIDLNELLVSHPSSTYFVKASGDSMIEAGISDGDLLVVDSSRNADHGDIVIAAIEGEFTVKRLQLRPTVQLIPMNGAYRPIPVGSEDTLDIFGVVTFIIKAVS</sequence>
<evidence type="ECO:0000250" key="1"/>
<evidence type="ECO:0000305" key="2"/>
<protein>
    <recommendedName>
        <fullName>Protein UmuD</fullName>
        <ecNumber>3.4.21.-</ecNumber>
    </recommendedName>
    <component>
        <recommendedName>
            <fullName>Protein UmuD'</fullName>
        </recommendedName>
    </component>
</protein>